<sequence>MANITVKLVRSRYGNTPKQRATLASLGLKKIRQERSFEKTDTLVGMIAKVQHLVEVTES</sequence>
<accession>C4XLZ1</accession>
<name>RL30_SOLM1</name>
<keyword id="KW-0687">Ribonucleoprotein</keyword>
<keyword id="KW-0689">Ribosomal protein</keyword>
<proteinExistence type="inferred from homology"/>
<evidence type="ECO:0000255" key="1">
    <source>
        <dbReference type="HAMAP-Rule" id="MF_01371"/>
    </source>
</evidence>
<evidence type="ECO:0000305" key="2"/>
<comment type="subunit">
    <text evidence="1">Part of the 50S ribosomal subunit.</text>
</comment>
<comment type="similarity">
    <text evidence="1">Belongs to the universal ribosomal protein uL30 family.</text>
</comment>
<protein>
    <recommendedName>
        <fullName evidence="1">Large ribosomal subunit protein uL30</fullName>
    </recommendedName>
    <alternativeName>
        <fullName evidence="2">50S ribosomal protein L30</fullName>
    </alternativeName>
</protein>
<gene>
    <name evidence="1" type="primary">rpmD</name>
    <name type="ordered locus">DMR_12380</name>
</gene>
<feature type="chain" id="PRO_1000215058" description="Large ribosomal subunit protein uL30">
    <location>
        <begin position="1"/>
        <end position="59"/>
    </location>
</feature>
<dbReference type="EMBL" id="AP010904">
    <property type="protein sequence ID" value="BAH74729.1"/>
    <property type="molecule type" value="Genomic_DNA"/>
</dbReference>
<dbReference type="RefSeq" id="WP_015859944.1">
    <property type="nucleotide sequence ID" value="NC_012796.1"/>
</dbReference>
<dbReference type="SMR" id="C4XLZ1"/>
<dbReference type="STRING" id="573370.DMR_12380"/>
<dbReference type="KEGG" id="dma:DMR_12380"/>
<dbReference type="eggNOG" id="COG1841">
    <property type="taxonomic scope" value="Bacteria"/>
</dbReference>
<dbReference type="HOGENOM" id="CLU_131047_1_3_7"/>
<dbReference type="OrthoDB" id="9812790at2"/>
<dbReference type="Proteomes" id="UP000009071">
    <property type="component" value="Chromosome"/>
</dbReference>
<dbReference type="GO" id="GO:0015934">
    <property type="term" value="C:large ribosomal subunit"/>
    <property type="evidence" value="ECO:0007669"/>
    <property type="project" value="InterPro"/>
</dbReference>
<dbReference type="GO" id="GO:0003735">
    <property type="term" value="F:structural constituent of ribosome"/>
    <property type="evidence" value="ECO:0007669"/>
    <property type="project" value="InterPro"/>
</dbReference>
<dbReference type="GO" id="GO:0006412">
    <property type="term" value="P:translation"/>
    <property type="evidence" value="ECO:0007669"/>
    <property type="project" value="InterPro"/>
</dbReference>
<dbReference type="CDD" id="cd01658">
    <property type="entry name" value="Ribosomal_L30"/>
    <property type="match status" value="1"/>
</dbReference>
<dbReference type="Gene3D" id="3.30.1390.20">
    <property type="entry name" value="Ribosomal protein L30, ferredoxin-like fold domain"/>
    <property type="match status" value="1"/>
</dbReference>
<dbReference type="HAMAP" id="MF_01371_B">
    <property type="entry name" value="Ribosomal_uL30_B"/>
    <property type="match status" value="1"/>
</dbReference>
<dbReference type="InterPro" id="IPR036919">
    <property type="entry name" value="Ribo_uL30_ferredoxin-like_sf"/>
</dbReference>
<dbReference type="InterPro" id="IPR005996">
    <property type="entry name" value="Ribosomal_uL30_bac-type"/>
</dbReference>
<dbReference type="InterPro" id="IPR018038">
    <property type="entry name" value="Ribosomal_uL30_CS"/>
</dbReference>
<dbReference type="InterPro" id="IPR016082">
    <property type="entry name" value="Ribosomal_uL30_ferredoxin-like"/>
</dbReference>
<dbReference type="NCBIfam" id="TIGR01308">
    <property type="entry name" value="rpmD_bact"/>
    <property type="match status" value="1"/>
</dbReference>
<dbReference type="Pfam" id="PF00327">
    <property type="entry name" value="Ribosomal_L30"/>
    <property type="match status" value="1"/>
</dbReference>
<dbReference type="PIRSF" id="PIRSF002211">
    <property type="entry name" value="Ribosomal_L30_bac-type"/>
    <property type="match status" value="1"/>
</dbReference>
<dbReference type="SUPFAM" id="SSF55129">
    <property type="entry name" value="Ribosomal protein L30p/L7e"/>
    <property type="match status" value="1"/>
</dbReference>
<dbReference type="PROSITE" id="PS00634">
    <property type="entry name" value="RIBOSOMAL_L30"/>
    <property type="match status" value="1"/>
</dbReference>
<organism>
    <name type="scientific">Solidesulfovibrio magneticus (strain ATCC 700980 / DSM 13731 / RS-1)</name>
    <name type="common">Desulfovibrio magneticus</name>
    <dbReference type="NCBI Taxonomy" id="573370"/>
    <lineage>
        <taxon>Bacteria</taxon>
        <taxon>Pseudomonadati</taxon>
        <taxon>Thermodesulfobacteriota</taxon>
        <taxon>Desulfovibrionia</taxon>
        <taxon>Desulfovibrionales</taxon>
        <taxon>Desulfovibrionaceae</taxon>
        <taxon>Solidesulfovibrio</taxon>
    </lineage>
</organism>
<reference key="1">
    <citation type="journal article" date="2009" name="Genome Res.">
        <title>Whole genome sequence of Desulfovibrio magneticus strain RS-1 revealed common gene clusters in magnetotactic bacteria.</title>
        <authorList>
            <person name="Nakazawa H."/>
            <person name="Arakaki A."/>
            <person name="Narita-Yamada S."/>
            <person name="Yashiro I."/>
            <person name="Jinno K."/>
            <person name="Aoki N."/>
            <person name="Tsuruyama A."/>
            <person name="Okamura Y."/>
            <person name="Tanikawa S."/>
            <person name="Fujita N."/>
            <person name="Takeyama H."/>
            <person name="Matsunaga T."/>
        </authorList>
    </citation>
    <scope>NUCLEOTIDE SEQUENCE [LARGE SCALE GENOMIC DNA]</scope>
    <source>
        <strain>ATCC 700980 / DSM 13731 / RS-1</strain>
    </source>
</reference>